<gene>
    <name type="primary">rps4</name>
</gene>
<accession>O20215</accession>
<proteinExistence type="inferred from homology"/>
<dbReference type="EMBL" id="Z68240">
    <property type="protein sequence ID" value="CAA92538.1"/>
    <property type="molecule type" value="Genomic_DNA"/>
</dbReference>
<dbReference type="SMR" id="O20215"/>
<dbReference type="GO" id="GO:0009507">
    <property type="term" value="C:chloroplast"/>
    <property type="evidence" value="ECO:0007669"/>
    <property type="project" value="UniProtKB-SubCell"/>
</dbReference>
<dbReference type="GO" id="GO:0015935">
    <property type="term" value="C:small ribosomal subunit"/>
    <property type="evidence" value="ECO:0007669"/>
    <property type="project" value="InterPro"/>
</dbReference>
<dbReference type="GO" id="GO:0019843">
    <property type="term" value="F:rRNA binding"/>
    <property type="evidence" value="ECO:0007669"/>
    <property type="project" value="UniProtKB-KW"/>
</dbReference>
<dbReference type="GO" id="GO:0003735">
    <property type="term" value="F:structural constituent of ribosome"/>
    <property type="evidence" value="ECO:0007669"/>
    <property type="project" value="InterPro"/>
</dbReference>
<dbReference type="GO" id="GO:0042274">
    <property type="term" value="P:ribosomal small subunit biogenesis"/>
    <property type="evidence" value="ECO:0007669"/>
    <property type="project" value="TreeGrafter"/>
</dbReference>
<dbReference type="GO" id="GO:0006412">
    <property type="term" value="P:translation"/>
    <property type="evidence" value="ECO:0007669"/>
    <property type="project" value="InterPro"/>
</dbReference>
<dbReference type="CDD" id="cd00165">
    <property type="entry name" value="S4"/>
    <property type="match status" value="1"/>
</dbReference>
<dbReference type="FunFam" id="1.10.1050.10:FF:000002">
    <property type="entry name" value="30S ribosomal protein S4, chloroplastic"/>
    <property type="match status" value="1"/>
</dbReference>
<dbReference type="FunFam" id="3.10.290.10:FF:000081">
    <property type="entry name" value="30S ribosomal protein S4, chloroplastic"/>
    <property type="match status" value="1"/>
</dbReference>
<dbReference type="Gene3D" id="1.10.1050.10">
    <property type="entry name" value="Ribosomal Protein S4 Delta 41, Chain A, domain 1"/>
    <property type="match status" value="1"/>
</dbReference>
<dbReference type="Gene3D" id="3.10.290.10">
    <property type="entry name" value="RNA-binding S4 domain"/>
    <property type="match status" value="1"/>
</dbReference>
<dbReference type="HAMAP" id="MF_01306_B">
    <property type="entry name" value="Ribosomal_uS4_B"/>
    <property type="match status" value="1"/>
</dbReference>
<dbReference type="InterPro" id="IPR022801">
    <property type="entry name" value="Ribosomal_uS4"/>
</dbReference>
<dbReference type="InterPro" id="IPR005709">
    <property type="entry name" value="Ribosomal_uS4_bac-type"/>
</dbReference>
<dbReference type="InterPro" id="IPR018079">
    <property type="entry name" value="Ribosomal_uS4_CS"/>
</dbReference>
<dbReference type="InterPro" id="IPR001912">
    <property type="entry name" value="Ribosomal_uS4_N"/>
</dbReference>
<dbReference type="InterPro" id="IPR002942">
    <property type="entry name" value="S4_RNA-bd"/>
</dbReference>
<dbReference type="InterPro" id="IPR036986">
    <property type="entry name" value="S4_RNA-bd_sf"/>
</dbReference>
<dbReference type="NCBIfam" id="NF003717">
    <property type="entry name" value="PRK05327.1"/>
    <property type="match status" value="1"/>
</dbReference>
<dbReference type="NCBIfam" id="TIGR01017">
    <property type="entry name" value="rpsD_bact"/>
    <property type="match status" value="1"/>
</dbReference>
<dbReference type="PANTHER" id="PTHR11831">
    <property type="entry name" value="30S 40S RIBOSOMAL PROTEIN"/>
    <property type="match status" value="1"/>
</dbReference>
<dbReference type="PANTHER" id="PTHR11831:SF4">
    <property type="entry name" value="SMALL RIBOSOMAL SUBUNIT PROTEIN US4M"/>
    <property type="match status" value="1"/>
</dbReference>
<dbReference type="Pfam" id="PF00163">
    <property type="entry name" value="Ribosomal_S4"/>
    <property type="match status" value="1"/>
</dbReference>
<dbReference type="Pfam" id="PF01479">
    <property type="entry name" value="S4"/>
    <property type="match status" value="1"/>
</dbReference>
<dbReference type="SMART" id="SM01390">
    <property type="entry name" value="Ribosomal_S4"/>
    <property type="match status" value="1"/>
</dbReference>
<dbReference type="SMART" id="SM00363">
    <property type="entry name" value="S4"/>
    <property type="match status" value="1"/>
</dbReference>
<dbReference type="SUPFAM" id="SSF55174">
    <property type="entry name" value="Alpha-L RNA-binding motif"/>
    <property type="match status" value="1"/>
</dbReference>
<dbReference type="PROSITE" id="PS00632">
    <property type="entry name" value="RIBOSOMAL_S4"/>
    <property type="match status" value="1"/>
</dbReference>
<dbReference type="PROSITE" id="PS50889">
    <property type="entry name" value="S4"/>
    <property type="match status" value="1"/>
</dbReference>
<organism>
    <name type="scientific">Freesia sp. (strain Lejeune 1997)</name>
    <dbReference type="NCBI Taxonomy" id="58989"/>
    <lineage>
        <taxon>Eukaryota</taxon>
        <taxon>Viridiplantae</taxon>
        <taxon>Streptophyta</taxon>
        <taxon>Embryophyta</taxon>
        <taxon>Tracheophyta</taxon>
        <taxon>Spermatophyta</taxon>
        <taxon>Magnoliopsida</taxon>
        <taxon>Liliopsida</taxon>
        <taxon>Asparagales</taxon>
        <taxon>Iridaceae</taxon>
        <taxon>Crocoideae</taxon>
        <taxon>Freesieae</taxon>
        <taxon>Freesia</taxon>
    </lineage>
</organism>
<keyword id="KW-0150">Chloroplast</keyword>
<keyword id="KW-0934">Plastid</keyword>
<keyword id="KW-0687">Ribonucleoprotein</keyword>
<keyword id="KW-0689">Ribosomal protein</keyword>
<keyword id="KW-0694">RNA-binding</keyword>
<keyword id="KW-0699">rRNA-binding</keyword>
<geneLocation type="chloroplast"/>
<feature type="chain" id="PRO_0000132587" description="Small ribosomal subunit protein uS4c">
    <location>
        <begin position="1" status="less than"/>
        <end position="183" status="greater than"/>
    </location>
</feature>
<feature type="domain" description="S4 RNA-binding">
    <location>
        <begin position="82"/>
        <end position="143"/>
    </location>
</feature>
<feature type="non-terminal residue">
    <location>
        <position position="1"/>
    </location>
</feature>
<feature type="non-terminal residue">
    <location>
        <position position="183"/>
    </location>
</feature>
<evidence type="ECO:0000250" key="1"/>
<evidence type="ECO:0000305" key="2"/>
<protein>
    <recommendedName>
        <fullName evidence="2">Small ribosomal subunit protein uS4c</fullName>
    </recommendedName>
    <alternativeName>
        <fullName>30S ribosomal protein S4, chloroplastic</fullName>
    </alternativeName>
</protein>
<name>RR4_FRESP</name>
<reference key="1">
    <citation type="journal article" date="1997" name="Plant Syst. Evol.">
        <title>Phylogenetic analysis of Iridaceae with parsimony and distance methods using the plastid gene rps4.</title>
        <authorList>
            <person name="Souza-Chies T.T."/>
            <person name="Bittar G."/>
            <person name="Nadot S."/>
            <person name="Carter L."/>
            <person name="Besin E."/>
            <person name="Lejeune B.P."/>
        </authorList>
    </citation>
    <scope>NUCLEOTIDE SEQUENCE [GENOMIC DNA]</scope>
</reference>
<sequence length="183" mass="21143">RFKKIRRLGALPGLTSKRPRSGSDLKNQLRSGKRSQYRIRLEEKQKLRFHYGLTERQLLKYVHIAGKAKGSTGQILLQLLEMRLDNILFRLGMASTIPGARQLVNHRHILVNGRIVDIPSYRCKPRDIITTNNKQRSKALIQNFIASSPRQEELPNHLTIDPFQYKGLVNQIIDSKWIGLKIN</sequence>
<comment type="function">
    <text evidence="1">One of the primary rRNA binding proteins, it binds directly to 16S rRNA where it nucleates assembly of the body of the 30S subunit.</text>
</comment>
<comment type="function">
    <text evidence="1">With S5 and S12 plays an important role in translational accuracy.</text>
</comment>
<comment type="subunit">
    <text evidence="1">Part of the 30S ribosomal subunit. Contacts protein S5. The interaction surface between S4 and S5 is involved in control of translational fidelity (By similarity).</text>
</comment>
<comment type="subcellular location">
    <subcellularLocation>
        <location>Plastid</location>
        <location>Chloroplast</location>
    </subcellularLocation>
</comment>
<comment type="similarity">
    <text evidence="2">Belongs to the universal ribosomal protein uS4 family.</text>
</comment>